<protein>
    <recommendedName>
        <fullName evidence="1">Photosystem II reaction center protein Psb30</fullName>
    </recommendedName>
    <alternativeName>
        <fullName evidence="1">Photosystem II reaction center protein Ycf12</fullName>
    </alternativeName>
</protein>
<sequence>MNAELIVQLGSLALITVAGPAIIVLLFLKQGNL</sequence>
<comment type="function">
    <text evidence="1">A core subunit of photosystem II (PSII), probably helps stabilize the reaction center.</text>
</comment>
<comment type="subunit">
    <text evidence="2">PSII is composed of 1 copy each of membrane proteins PsbA, PsbB, PsbC, PsbD, PsbE, PsbF, PsbH, PsbI, PsbJ, PsbK, PsbL, PsbM, PsbT, PsbY, PsbZ, Psb30/Ycf12, peripheral proteins of the oxygen-evolving complex and a large number of cofactors. It forms dimeric complexes.</text>
</comment>
<comment type="subcellular location">
    <subcellularLocation>
        <location evidence="1">Plastid</location>
        <location evidence="1">Chloroplast thylakoid membrane</location>
        <topology evidence="1">Single-pass membrane protein</topology>
    </subcellularLocation>
</comment>
<comment type="similarity">
    <text evidence="1">Belongs to the Psb30/Ycf12 family.</text>
</comment>
<accession>Q9MS57</accession>
<keyword id="KW-0150">Chloroplast</keyword>
<keyword id="KW-0472">Membrane</keyword>
<keyword id="KW-0602">Photosynthesis</keyword>
<keyword id="KW-0604">Photosystem II</keyword>
<keyword id="KW-0934">Plastid</keyword>
<keyword id="KW-0793">Thylakoid</keyword>
<keyword id="KW-0812">Transmembrane</keyword>
<keyword id="KW-1133">Transmembrane helix</keyword>
<geneLocation type="chloroplast"/>
<gene>
    <name evidence="1" type="primary">psb30</name>
    <name evidence="1" type="synonym">ycf12</name>
</gene>
<evidence type="ECO:0000255" key="1">
    <source>
        <dbReference type="HAMAP-Rule" id="MF_01329"/>
    </source>
</evidence>
<evidence type="ECO:0000305" key="2"/>
<reference key="1">
    <citation type="journal article" date="2001" name="Mol. Gen. Genet.">
        <title>Comparison of psbK operon organization and group III intron content in chloroplast genomes of 12 Euglenoid species.</title>
        <authorList>
            <person name="Doetsch N.A."/>
            <person name="Thompson M.D."/>
            <person name="Favreau M.R."/>
            <person name="Hallick R.B."/>
        </authorList>
    </citation>
    <scope>NUCLEOTIDE SEQUENCE [GENOMIC DNA]</scope>
    <source>
        <strain>UTEX 327</strain>
    </source>
</reference>
<organism>
    <name type="scientific">Euglena stellata</name>
    <dbReference type="NCBI Taxonomy" id="38278"/>
    <lineage>
        <taxon>Eukaryota</taxon>
        <taxon>Discoba</taxon>
        <taxon>Euglenozoa</taxon>
        <taxon>Euglenida</taxon>
        <taxon>Spirocuta</taxon>
        <taxon>Euglenophyceae</taxon>
        <taxon>Euglenales</taxon>
        <taxon>Euglenaceae</taxon>
        <taxon>Euglena</taxon>
    </lineage>
</organism>
<feature type="chain" id="PRO_0000059025" description="Photosystem II reaction center protein Psb30">
    <location>
        <begin position="1"/>
        <end position="33"/>
    </location>
</feature>
<feature type="transmembrane region" description="Helical" evidence="1">
    <location>
        <begin position="5"/>
        <end position="25"/>
    </location>
</feature>
<proteinExistence type="inferred from homology"/>
<dbReference type="EMBL" id="AF241283">
    <property type="protein sequence ID" value="AAF82460.1"/>
    <property type="molecule type" value="Genomic_DNA"/>
</dbReference>
<dbReference type="SMR" id="Q9MS57"/>
<dbReference type="GO" id="GO:0009535">
    <property type="term" value="C:chloroplast thylakoid membrane"/>
    <property type="evidence" value="ECO:0007669"/>
    <property type="project" value="UniProtKB-SubCell"/>
</dbReference>
<dbReference type="GO" id="GO:0009523">
    <property type="term" value="C:photosystem II"/>
    <property type="evidence" value="ECO:0007669"/>
    <property type="project" value="UniProtKB-KW"/>
</dbReference>
<dbReference type="GO" id="GO:0015979">
    <property type="term" value="P:photosynthesis"/>
    <property type="evidence" value="ECO:0007669"/>
    <property type="project" value="UniProtKB-KW"/>
</dbReference>
<dbReference type="HAMAP" id="MF_01329">
    <property type="entry name" value="PSII_Psb30_Ycf12"/>
    <property type="match status" value="1"/>
</dbReference>
<dbReference type="InterPro" id="IPR010284">
    <property type="entry name" value="PSII_Ycf12_core-subunit"/>
</dbReference>
<dbReference type="NCBIfam" id="NF010239">
    <property type="entry name" value="PRK13686.1"/>
    <property type="match status" value="1"/>
</dbReference>
<dbReference type="Pfam" id="PF05969">
    <property type="entry name" value="PSII_Ycf12"/>
    <property type="match status" value="1"/>
</dbReference>
<name>PSB30_EUGST</name>